<sequence>MRDAVTSLIKNYDVAGRYFDRNAIESLKSYFESGTQRVQAAKAINANAAAIVKQTGSKLFDEQPELIRPGGNAYTTRRYAACLRDLDYYLRYATYAIVAGSMDVLDERVLQGLRETYNSLGVPIGPTVRGIQIMKEIVKEQLGAAGIPNTSFVDEPFDYMTRELGEKDI</sequence>
<gene>
    <name type="primary">apcD</name>
</gene>
<accession>P07553</accession>
<evidence type="ECO:0000269" key="1">
    <source>
    </source>
</evidence>
<evidence type="ECO:0000269" key="2">
    <source ref="3"/>
</evidence>
<evidence type="ECO:0000305" key="3"/>
<comment type="function">
    <text>Light-harvesting photosynthetic bile pigment-protein from the phycobiliprotein complex. This is a protein functionally equivalent to, but with weaker absorbance than, allophycocyanin beta chain.</text>
</comment>
<comment type="subunit">
    <text>Heterodimer of an alpha and a beta chain.</text>
</comment>
<comment type="subcellular location">
    <subcellularLocation>
        <location>Cellular thylakoid membrane</location>
        <topology>Peripheral membrane protein</topology>
        <orientation>Cytoplasmic side</orientation>
    </subcellularLocation>
    <text>A minor component of the phycobilisome core.</text>
</comment>
<comment type="PTM">
    <text>Contains one covalently linked bilin chromophore.</text>
</comment>
<comment type="similarity">
    <text evidence="3">Belongs to the phycobiliprotein family.</text>
</comment>
<organism>
    <name type="scientific">Mastigocladus laminosus</name>
    <name type="common">Fischerella sp.</name>
    <dbReference type="NCBI Taxonomy" id="83541"/>
    <lineage>
        <taxon>Bacteria</taxon>
        <taxon>Bacillati</taxon>
        <taxon>Cyanobacteriota</taxon>
        <taxon>Cyanophyceae</taxon>
        <taxon>Nostocales</taxon>
        <taxon>Hapalosiphonaceae</taxon>
        <taxon>Mastigocladus</taxon>
    </lineage>
</organism>
<feature type="chain" id="PRO_0000199112" description="Phycobiliprotein beta chain">
    <location>
        <begin position="1"/>
        <end position="169"/>
    </location>
</feature>
<feature type="binding site" description="covalent">
    <location>
        <position position="82"/>
    </location>
    <ligand>
        <name>(2R,3E)-phycocyanobilin</name>
        <dbReference type="ChEBI" id="CHEBI:85275"/>
    </ligand>
</feature>
<feature type="modified residue" description="N4-methylasparagine" evidence="1 2">
    <location>
        <position position="72"/>
    </location>
</feature>
<feature type="sequence conflict" description="In Ref. 1; AA sequence." evidence="3" ref="1">
    <original>N</original>
    <variation>S</variation>
    <location>
        <position position="72"/>
    </location>
</feature>
<name>PHBB_MASLA</name>
<keyword id="KW-0042">Antenna complex</keyword>
<keyword id="KW-0089">Bile pigment</keyword>
<keyword id="KW-0157">Chromophore</keyword>
<keyword id="KW-0903">Direct protein sequencing</keyword>
<keyword id="KW-0249">Electron transport</keyword>
<keyword id="KW-0472">Membrane</keyword>
<keyword id="KW-0488">Methylation</keyword>
<keyword id="KW-0602">Photosynthesis</keyword>
<keyword id="KW-0605">Phycobilisome</keyword>
<keyword id="KW-0793">Thylakoid</keyword>
<keyword id="KW-0813">Transport</keyword>
<proteinExistence type="evidence at protein level"/>
<protein>
    <recommendedName>
        <fullName>Phycobiliprotein beta chain</fullName>
    </recommendedName>
    <alternativeName>
        <fullName>16.2</fullName>
    </alternativeName>
</protein>
<reference key="1">
    <citation type="journal article" date="1987" name="Biol. Chem. Hoppe-Seyler">
        <title>The phycobiliprotein beta 16.2 of the allophycocyanin core from the cyanobacterium Mastigocladus laminosus. Characterization and complete amino-acid sequence.</title>
        <authorList>
            <person name="Rumbeli R."/>
            <person name="Wirth M."/>
            <person name="Suter F."/>
            <person name="Zuber H."/>
        </authorList>
    </citation>
    <scope>PROTEIN SEQUENCE</scope>
</reference>
<reference key="2">
    <citation type="journal article" date="1987" name="Biol. Chem. Hoppe-Seyler">
        <title>Isolation and localization of N4-methylasparagine in phycobiliproteins from the cyanobacterium Mastigocladus laminosus.</title>
        <authorList>
            <person name="Ruembeli R."/>
            <person name="Suter F."/>
            <person name="Wirth M."/>
            <person name="Sidler W."/>
            <person name="Zuber H."/>
        </authorList>
    </citation>
    <scope>PROTEIN SEQUENCE OF 58-100</scope>
    <scope>METHYLATION AT ASN-72</scope>
</reference>
<reference key="3">
    <citation type="journal article" date="1987" name="FEBS Lett.">
        <title>Gamma-N-methylasparagine in phycobiliproteins from the cyanobacteria Mastigocladus laminosus and Calothrix.</title>
        <authorList>
            <person name="Ruembeli R."/>
            <person name="Suter F."/>
            <person name="Wirth M."/>
            <person name="Sidler W."/>
            <person name="Zuber H."/>
        </authorList>
    </citation>
    <scope>PROTEIN SEQUENCE OF 55-83</scope>
    <scope>METHYLATION AT ASN-72</scope>
</reference>
<dbReference type="SMR" id="P07553"/>
<dbReference type="iPTMnet" id="P07553"/>
<dbReference type="GO" id="GO:0030089">
    <property type="term" value="C:phycobilisome"/>
    <property type="evidence" value="ECO:0007669"/>
    <property type="project" value="UniProtKB-KW"/>
</dbReference>
<dbReference type="GO" id="GO:0031676">
    <property type="term" value="C:plasma membrane-derived thylakoid membrane"/>
    <property type="evidence" value="ECO:0007669"/>
    <property type="project" value="UniProtKB-SubCell"/>
</dbReference>
<dbReference type="GO" id="GO:0015979">
    <property type="term" value="P:photosynthesis"/>
    <property type="evidence" value="ECO:0007669"/>
    <property type="project" value="UniProtKB-KW"/>
</dbReference>
<dbReference type="CDD" id="cd12126">
    <property type="entry name" value="APC_beta"/>
    <property type="match status" value="1"/>
</dbReference>
<dbReference type="Gene3D" id="1.10.490.20">
    <property type="entry name" value="Phycocyanins"/>
    <property type="match status" value="1"/>
</dbReference>
<dbReference type="InterPro" id="IPR006245">
    <property type="entry name" value="Allophycocyanin_b"/>
</dbReference>
<dbReference type="InterPro" id="IPR009050">
    <property type="entry name" value="Globin-like_sf"/>
</dbReference>
<dbReference type="InterPro" id="IPR012128">
    <property type="entry name" value="Phycobilisome_asu/bsu"/>
</dbReference>
<dbReference type="InterPro" id="IPR038719">
    <property type="entry name" value="Phycobilisome_asu/bsu_sf"/>
</dbReference>
<dbReference type="NCBIfam" id="TIGR01337">
    <property type="entry name" value="apcB"/>
    <property type="match status" value="1"/>
</dbReference>
<dbReference type="PANTHER" id="PTHR34011:SF3">
    <property type="entry name" value="ALLOPHYCOCYANIN BETA CHAIN"/>
    <property type="match status" value="1"/>
</dbReference>
<dbReference type="PANTHER" id="PTHR34011">
    <property type="entry name" value="PHYCOBILISOME 32.1 KDA LINKER POLYPEPTIDE, PHYCOCYANIN-ASSOCIATED, ROD 2-RELATED"/>
    <property type="match status" value="1"/>
</dbReference>
<dbReference type="Pfam" id="PF00502">
    <property type="entry name" value="Phycobilisome"/>
    <property type="match status" value="1"/>
</dbReference>
<dbReference type="PIRSF" id="PIRSF000081">
    <property type="entry name" value="Phycocyanin"/>
    <property type="match status" value="1"/>
</dbReference>
<dbReference type="SUPFAM" id="SSF46458">
    <property type="entry name" value="Globin-like"/>
    <property type="match status" value="1"/>
</dbReference>